<proteinExistence type="predicted"/>
<protein>
    <recommendedName>
        <fullName>Uncharacterized protein YDR157W</fullName>
    </recommendedName>
</protein>
<keyword id="KW-1185">Reference proteome</keyword>
<reference key="1">
    <citation type="journal article" date="1997" name="Nature">
        <title>The nucleotide sequence of Saccharomyces cerevisiae chromosome IV.</title>
        <authorList>
            <person name="Jacq C."/>
            <person name="Alt-Moerbe J."/>
            <person name="Andre B."/>
            <person name="Arnold W."/>
            <person name="Bahr A."/>
            <person name="Ballesta J.P.G."/>
            <person name="Bargues M."/>
            <person name="Baron L."/>
            <person name="Becker A."/>
            <person name="Biteau N."/>
            <person name="Bloecker H."/>
            <person name="Blugeon C."/>
            <person name="Boskovic J."/>
            <person name="Brandt P."/>
            <person name="Brueckner M."/>
            <person name="Buitrago M.J."/>
            <person name="Coster F."/>
            <person name="Delaveau T."/>
            <person name="del Rey F."/>
            <person name="Dujon B."/>
            <person name="Eide L.G."/>
            <person name="Garcia-Cantalejo J.M."/>
            <person name="Goffeau A."/>
            <person name="Gomez-Peris A."/>
            <person name="Granotier C."/>
            <person name="Hanemann V."/>
            <person name="Hankeln T."/>
            <person name="Hoheisel J.D."/>
            <person name="Jaeger W."/>
            <person name="Jimenez A."/>
            <person name="Jonniaux J.-L."/>
            <person name="Kraemer C."/>
            <person name="Kuester H."/>
            <person name="Laamanen P."/>
            <person name="Legros Y."/>
            <person name="Louis E.J."/>
            <person name="Moeller-Rieker S."/>
            <person name="Monnet A."/>
            <person name="Moro M."/>
            <person name="Mueller-Auer S."/>
            <person name="Nussbaumer B."/>
            <person name="Paricio N."/>
            <person name="Paulin L."/>
            <person name="Perea J."/>
            <person name="Perez-Alonso M."/>
            <person name="Perez-Ortin J.E."/>
            <person name="Pohl T.M."/>
            <person name="Prydz H."/>
            <person name="Purnelle B."/>
            <person name="Rasmussen S.W."/>
            <person name="Remacha M.A."/>
            <person name="Revuelta J.L."/>
            <person name="Rieger M."/>
            <person name="Salom D."/>
            <person name="Saluz H.P."/>
            <person name="Saiz J.E."/>
            <person name="Saren A.-M."/>
            <person name="Schaefer M."/>
            <person name="Scharfe M."/>
            <person name="Schmidt E.R."/>
            <person name="Schneider C."/>
            <person name="Scholler P."/>
            <person name="Schwarz S."/>
            <person name="Soler-Mira A."/>
            <person name="Urrestarazu L.A."/>
            <person name="Verhasselt P."/>
            <person name="Vissers S."/>
            <person name="Voet M."/>
            <person name="Volckaert G."/>
            <person name="Wagner G."/>
            <person name="Wambutt R."/>
            <person name="Wedler E."/>
            <person name="Wedler H."/>
            <person name="Woelfl S."/>
            <person name="Harris D.E."/>
            <person name="Bowman S."/>
            <person name="Brown D."/>
            <person name="Churcher C.M."/>
            <person name="Connor R."/>
            <person name="Dedman K."/>
            <person name="Gentles S."/>
            <person name="Hamlin N."/>
            <person name="Hunt S."/>
            <person name="Jones L."/>
            <person name="McDonald S."/>
            <person name="Murphy L.D."/>
            <person name="Niblett D."/>
            <person name="Odell C."/>
            <person name="Oliver K."/>
            <person name="Rajandream M.A."/>
            <person name="Richards C."/>
            <person name="Shore L."/>
            <person name="Walsh S.V."/>
            <person name="Barrell B.G."/>
            <person name="Dietrich F.S."/>
            <person name="Mulligan J.T."/>
            <person name="Allen E."/>
            <person name="Araujo R."/>
            <person name="Aviles E."/>
            <person name="Berno A."/>
            <person name="Carpenter J."/>
            <person name="Chen E."/>
            <person name="Cherry J.M."/>
            <person name="Chung E."/>
            <person name="Duncan M."/>
            <person name="Hunicke-Smith S."/>
            <person name="Hyman R.W."/>
            <person name="Komp C."/>
            <person name="Lashkari D."/>
            <person name="Lew H."/>
            <person name="Lin D."/>
            <person name="Mosedale D."/>
            <person name="Nakahara K."/>
            <person name="Namath A."/>
            <person name="Oefner P."/>
            <person name="Oh C."/>
            <person name="Petel F.X."/>
            <person name="Roberts D."/>
            <person name="Schramm S."/>
            <person name="Schroeder M."/>
            <person name="Shogren T."/>
            <person name="Shroff N."/>
            <person name="Winant A."/>
            <person name="Yelton M.A."/>
            <person name="Botstein D."/>
            <person name="Davis R.W."/>
            <person name="Johnston M."/>
            <person name="Andrews S."/>
            <person name="Brinkman R."/>
            <person name="Cooper J."/>
            <person name="Ding H."/>
            <person name="Du Z."/>
            <person name="Favello A."/>
            <person name="Fulton L."/>
            <person name="Gattung S."/>
            <person name="Greco T."/>
            <person name="Hallsworth K."/>
            <person name="Hawkins J."/>
            <person name="Hillier L.W."/>
            <person name="Jier M."/>
            <person name="Johnson D."/>
            <person name="Johnston L."/>
            <person name="Kirsten J."/>
            <person name="Kucaba T."/>
            <person name="Langston Y."/>
            <person name="Latreille P."/>
            <person name="Le T."/>
            <person name="Mardis E."/>
            <person name="Menezes S."/>
            <person name="Miller N."/>
            <person name="Nhan M."/>
            <person name="Pauley A."/>
            <person name="Peluso D."/>
            <person name="Rifkin L."/>
            <person name="Riles L."/>
            <person name="Taich A."/>
            <person name="Trevaskis E."/>
            <person name="Vignati D."/>
            <person name="Wilcox L."/>
            <person name="Wohldman P."/>
            <person name="Vaudin M."/>
            <person name="Wilson R."/>
            <person name="Waterston R."/>
            <person name="Albermann K."/>
            <person name="Hani J."/>
            <person name="Heumann K."/>
            <person name="Kleine K."/>
            <person name="Mewes H.-W."/>
            <person name="Zollner A."/>
            <person name="Zaccaria P."/>
        </authorList>
    </citation>
    <scope>NUCLEOTIDE SEQUENCE [LARGE SCALE GENOMIC DNA]</scope>
    <source>
        <strain>ATCC 204508 / S288c</strain>
    </source>
</reference>
<reference key="2">
    <citation type="journal article" date="2014" name="G3 (Bethesda)">
        <title>The reference genome sequence of Saccharomyces cerevisiae: Then and now.</title>
        <authorList>
            <person name="Engel S.R."/>
            <person name="Dietrich F.S."/>
            <person name="Fisk D.G."/>
            <person name="Binkley G."/>
            <person name="Balakrishnan R."/>
            <person name="Costanzo M.C."/>
            <person name="Dwight S.S."/>
            <person name="Hitz B.C."/>
            <person name="Karra K."/>
            <person name="Nash R.S."/>
            <person name="Weng S."/>
            <person name="Wong E.D."/>
            <person name="Lloyd P."/>
            <person name="Skrzypek M.S."/>
            <person name="Miyasato S.R."/>
            <person name="Simison M."/>
            <person name="Cherry J.M."/>
        </authorList>
    </citation>
    <scope>GENOME REANNOTATION</scope>
    <source>
        <strain>ATCC 204508 / S288c</strain>
    </source>
</reference>
<sequence>MSETCSSSLALLHKILHIHSHTPSVYYNICISVRILTSERLQCFFFSFFPDPNITGSGLKVPGFLFFHTFFFSKSCCQALIDSFSSDYYQFKMLEKNRKAEKINKRTIFICSFTFEYKIKSCFSCFHLSTHTN</sequence>
<accession>A0A023PZE8</accession>
<accession>A0A1S0T058</accession>
<feature type="chain" id="PRO_0000430985" description="Uncharacterized protein YDR157W">
    <location>
        <begin position="1"/>
        <end position="133"/>
    </location>
</feature>
<dbReference type="EMBL" id="KJ412219">
    <property type="protein sequence ID" value="AHX39262.1"/>
    <property type="molecule type" value="Genomic_DNA"/>
</dbReference>
<dbReference type="EMBL" id="BK006938">
    <property type="protein sequence ID" value="DAA80277.1"/>
    <property type="molecule type" value="Genomic_DNA"/>
</dbReference>
<dbReference type="PIR" id="S69759">
    <property type="entry name" value="S69759"/>
</dbReference>
<dbReference type="RefSeq" id="NP_001335757.1">
    <property type="nucleotide sequence ID" value="NM_001348811.1"/>
</dbReference>
<dbReference type="FunCoup" id="A0A023PZE8">
    <property type="interactions" value="35"/>
</dbReference>
<dbReference type="MINT" id="A0A023PZE8"/>
<dbReference type="STRING" id="4932.YDR157W"/>
<dbReference type="PaxDb" id="4932-YDR157W"/>
<dbReference type="EnsemblFungi" id="YDR157W_mRNA">
    <property type="protein sequence ID" value="YDR157W"/>
    <property type="gene ID" value="YDR157W"/>
</dbReference>
<dbReference type="GeneID" id="851735"/>
<dbReference type="AGR" id="SGD:S000002564"/>
<dbReference type="SGD" id="S000002564">
    <property type="gene designation" value="YDR157W"/>
</dbReference>
<dbReference type="HOGENOM" id="CLU_1908314_0_0_1"/>
<dbReference type="InParanoid" id="A0A023PZE8"/>
<dbReference type="PRO" id="PR:A0A023PZE8"/>
<dbReference type="Proteomes" id="UP000002311">
    <property type="component" value="Chromosome IV"/>
</dbReference>
<dbReference type="RNAct" id="A0A023PZE8">
    <property type="molecule type" value="protein"/>
</dbReference>
<name>YD57W_YEAST</name>
<organism>
    <name type="scientific">Saccharomyces cerevisiae (strain ATCC 204508 / S288c)</name>
    <name type="common">Baker's yeast</name>
    <dbReference type="NCBI Taxonomy" id="559292"/>
    <lineage>
        <taxon>Eukaryota</taxon>
        <taxon>Fungi</taxon>
        <taxon>Dikarya</taxon>
        <taxon>Ascomycota</taxon>
        <taxon>Saccharomycotina</taxon>
        <taxon>Saccharomycetes</taxon>
        <taxon>Saccharomycetales</taxon>
        <taxon>Saccharomycetaceae</taxon>
        <taxon>Saccharomyces</taxon>
    </lineage>
</organism>
<gene>
    <name type="ordered locus">YDR157W</name>
</gene>